<feature type="chain" id="PRO_0000345590" description="Small ribosomal subunit protein bS18c">
    <location>
        <begin position="1"/>
        <end position="101"/>
    </location>
</feature>
<feature type="region of interest" description="Disordered" evidence="2">
    <location>
        <begin position="1"/>
        <end position="23"/>
    </location>
</feature>
<feature type="compositionally biased region" description="Basic residues" evidence="2">
    <location>
        <begin position="1"/>
        <end position="19"/>
    </location>
</feature>
<accession>A9L9B8</accession>
<name>RR18_LEMMI</name>
<sequence length="101" mass="11947">MDKSKQPFHKTKRSFRRRLPPIGSGDRIDYRNMSLISRFISEQGKILSRRVNRLTLKQQRLITIAIKQARILSLLPFLNNEKQFERTESIPRATGPRTRNK</sequence>
<evidence type="ECO:0000255" key="1">
    <source>
        <dbReference type="HAMAP-Rule" id="MF_00270"/>
    </source>
</evidence>
<evidence type="ECO:0000256" key="2">
    <source>
        <dbReference type="SAM" id="MobiDB-lite"/>
    </source>
</evidence>
<evidence type="ECO:0000305" key="3"/>
<geneLocation type="chloroplast"/>
<comment type="subunit">
    <text evidence="1">Part of the 30S ribosomal subunit.</text>
</comment>
<comment type="subcellular location">
    <subcellularLocation>
        <location>Plastid</location>
        <location>Chloroplast</location>
    </subcellularLocation>
</comment>
<comment type="similarity">
    <text evidence="1">Belongs to the bacterial ribosomal protein bS18 family.</text>
</comment>
<organism>
    <name type="scientific">Lemna minor</name>
    <name type="common">Common duckweed</name>
    <dbReference type="NCBI Taxonomy" id="4472"/>
    <lineage>
        <taxon>Eukaryota</taxon>
        <taxon>Viridiplantae</taxon>
        <taxon>Streptophyta</taxon>
        <taxon>Embryophyta</taxon>
        <taxon>Tracheophyta</taxon>
        <taxon>Spermatophyta</taxon>
        <taxon>Magnoliopsida</taxon>
        <taxon>Liliopsida</taxon>
        <taxon>Araceae</taxon>
        <taxon>Lemnoideae</taxon>
        <taxon>Lemna</taxon>
    </lineage>
</organism>
<proteinExistence type="inferred from homology"/>
<keyword id="KW-0150">Chloroplast</keyword>
<keyword id="KW-0934">Plastid</keyword>
<keyword id="KW-0687">Ribonucleoprotein</keyword>
<keyword id="KW-0689">Ribosomal protein</keyword>
<keyword id="KW-0694">RNA-binding</keyword>
<keyword id="KW-0699">rRNA-binding</keyword>
<protein>
    <recommendedName>
        <fullName evidence="1">Small ribosomal subunit protein bS18c</fullName>
    </recommendedName>
    <alternativeName>
        <fullName evidence="3">30S ribosomal protein S18, chloroplastic</fullName>
    </alternativeName>
</protein>
<reference key="1">
    <citation type="journal article" date="2008" name="J. Mol. Evol.">
        <title>Complete sequence of the Duckweed (Lemna minor) chloroplast genome: structural organization and phylogenetic relationships to other angiosperms.</title>
        <authorList>
            <person name="Mardanov A.V."/>
            <person name="Ravin N.V."/>
            <person name="Kuznetsov B.B."/>
            <person name="Samigullin T.H."/>
            <person name="Antonov A.S."/>
            <person name="Kolganova T.V."/>
            <person name="Skyabin K.G."/>
        </authorList>
    </citation>
    <scope>NUCLEOTIDE SEQUENCE [LARGE SCALE GENOMIC DNA]</scope>
</reference>
<gene>
    <name evidence="1" type="primary">rps18</name>
</gene>
<dbReference type="EMBL" id="DQ400350">
    <property type="protein sequence ID" value="ABD48517.1"/>
    <property type="molecule type" value="Genomic_DNA"/>
</dbReference>
<dbReference type="RefSeq" id="YP_001595530.1">
    <property type="nucleotide sequence ID" value="NC_010109.1"/>
</dbReference>
<dbReference type="SMR" id="A9L9B8"/>
<dbReference type="GeneID" id="5787549"/>
<dbReference type="GO" id="GO:0009507">
    <property type="term" value="C:chloroplast"/>
    <property type="evidence" value="ECO:0007669"/>
    <property type="project" value="UniProtKB-SubCell"/>
</dbReference>
<dbReference type="GO" id="GO:0005763">
    <property type="term" value="C:mitochondrial small ribosomal subunit"/>
    <property type="evidence" value="ECO:0007669"/>
    <property type="project" value="TreeGrafter"/>
</dbReference>
<dbReference type="GO" id="GO:0070181">
    <property type="term" value="F:small ribosomal subunit rRNA binding"/>
    <property type="evidence" value="ECO:0007669"/>
    <property type="project" value="TreeGrafter"/>
</dbReference>
<dbReference type="GO" id="GO:0003735">
    <property type="term" value="F:structural constituent of ribosome"/>
    <property type="evidence" value="ECO:0007669"/>
    <property type="project" value="InterPro"/>
</dbReference>
<dbReference type="GO" id="GO:0006412">
    <property type="term" value="P:translation"/>
    <property type="evidence" value="ECO:0007669"/>
    <property type="project" value="UniProtKB-UniRule"/>
</dbReference>
<dbReference type="FunFam" id="4.10.640.10:FF:000002">
    <property type="entry name" value="30S ribosomal protein S18, chloroplastic"/>
    <property type="match status" value="1"/>
</dbReference>
<dbReference type="Gene3D" id="4.10.640.10">
    <property type="entry name" value="Ribosomal protein S18"/>
    <property type="match status" value="1"/>
</dbReference>
<dbReference type="HAMAP" id="MF_00270">
    <property type="entry name" value="Ribosomal_bS18"/>
    <property type="match status" value="1"/>
</dbReference>
<dbReference type="InterPro" id="IPR001648">
    <property type="entry name" value="Ribosomal_bS18"/>
</dbReference>
<dbReference type="InterPro" id="IPR018275">
    <property type="entry name" value="Ribosomal_bS18_CS"/>
</dbReference>
<dbReference type="InterPro" id="IPR036870">
    <property type="entry name" value="Ribosomal_bS18_sf"/>
</dbReference>
<dbReference type="NCBIfam" id="TIGR00165">
    <property type="entry name" value="S18"/>
    <property type="match status" value="1"/>
</dbReference>
<dbReference type="PANTHER" id="PTHR13479">
    <property type="entry name" value="30S RIBOSOMAL PROTEIN S18"/>
    <property type="match status" value="1"/>
</dbReference>
<dbReference type="PANTHER" id="PTHR13479:SF40">
    <property type="entry name" value="SMALL RIBOSOMAL SUBUNIT PROTEIN BS18M"/>
    <property type="match status" value="1"/>
</dbReference>
<dbReference type="Pfam" id="PF01084">
    <property type="entry name" value="Ribosomal_S18"/>
    <property type="match status" value="1"/>
</dbReference>
<dbReference type="PRINTS" id="PR00974">
    <property type="entry name" value="RIBOSOMALS18"/>
</dbReference>
<dbReference type="SUPFAM" id="SSF46911">
    <property type="entry name" value="Ribosomal protein S18"/>
    <property type="match status" value="1"/>
</dbReference>
<dbReference type="PROSITE" id="PS00057">
    <property type="entry name" value="RIBOSOMAL_S18"/>
    <property type="match status" value="1"/>
</dbReference>